<protein>
    <recommendedName>
        <fullName evidence="1">Tetraacyldisaccharide 4'-kinase</fullName>
        <ecNumber evidence="1">2.7.1.130</ecNumber>
    </recommendedName>
    <alternativeName>
        <fullName evidence="1">Lipid A 4'-kinase</fullName>
    </alternativeName>
</protein>
<name>LPXK_AQUAE</name>
<sequence length="315" mass="36542">MLRSSLLPFSYLYEKIINFRNTLYDKGFLKIKKLPVPVISVGNLSVGGSGKTSFVMYLADLLKDKRVCILSRGYKRKSKGTLIVSEYGNLKVSWEEAGDEPYLMAKLLPHVSVVASEDRYKGGLLALEKLSPEVFILDDGFQHRKLHRDLNILLLKKKDLKDRLLPAGNLREPLKEIRRADALVLTYQEVEPFEFFTGKPTFKMFREFCCLLNSDFEEVPFDILKEREVIAFSGLGDNGQFRKVLKNLGIKVKEFMSFPDHYDYSDFTPEEGEIYLTTPKDLIKLQGYENVFALNFKVKLEREEKLKKLIYRIFY</sequence>
<keyword id="KW-0002">3D-structure</keyword>
<keyword id="KW-0067">ATP-binding</keyword>
<keyword id="KW-0418">Kinase</keyword>
<keyword id="KW-0441">Lipid A biosynthesis</keyword>
<keyword id="KW-0444">Lipid biosynthesis</keyword>
<keyword id="KW-0443">Lipid metabolism</keyword>
<keyword id="KW-0547">Nucleotide-binding</keyword>
<keyword id="KW-1185">Reference proteome</keyword>
<keyword id="KW-0808">Transferase</keyword>
<organism>
    <name type="scientific">Aquifex aeolicus (strain VF5)</name>
    <dbReference type="NCBI Taxonomy" id="224324"/>
    <lineage>
        <taxon>Bacteria</taxon>
        <taxon>Pseudomonadati</taxon>
        <taxon>Aquificota</taxon>
        <taxon>Aquificia</taxon>
        <taxon>Aquificales</taxon>
        <taxon>Aquificaceae</taxon>
        <taxon>Aquifex</taxon>
    </lineage>
</organism>
<reference key="1">
    <citation type="journal article" date="1998" name="Nature">
        <title>The complete genome of the hyperthermophilic bacterium Aquifex aeolicus.</title>
        <authorList>
            <person name="Deckert G."/>
            <person name="Warren P.V."/>
            <person name="Gaasterland T."/>
            <person name="Young W.G."/>
            <person name="Lenox A.L."/>
            <person name="Graham D.E."/>
            <person name="Overbeek R."/>
            <person name="Snead M.A."/>
            <person name="Keller M."/>
            <person name="Aujay M."/>
            <person name="Huber R."/>
            <person name="Feldman R.A."/>
            <person name="Short J.M."/>
            <person name="Olsen G.J."/>
            <person name="Swanson R.V."/>
        </authorList>
    </citation>
    <scope>NUCLEOTIDE SEQUENCE [LARGE SCALE GENOMIC DNA]</scope>
    <source>
        <strain>VF5</strain>
    </source>
</reference>
<comment type="function">
    <text evidence="1">Transfers the gamma-phosphate of ATP to the 4'-position of a tetraacyldisaccharide 1-phosphate intermediate (termed DS-1-P) to form tetraacyldisaccharide 1,4'-bis-phosphate (lipid IVA).</text>
</comment>
<comment type="catalytic activity">
    <reaction evidence="1">
        <text>a lipid A disaccharide + ATP = a lipid IVA + ADP + H(+)</text>
        <dbReference type="Rhea" id="RHEA:67840"/>
        <dbReference type="ChEBI" id="CHEBI:15378"/>
        <dbReference type="ChEBI" id="CHEBI:30616"/>
        <dbReference type="ChEBI" id="CHEBI:176343"/>
        <dbReference type="ChEBI" id="CHEBI:176425"/>
        <dbReference type="ChEBI" id="CHEBI:456216"/>
        <dbReference type="EC" id="2.7.1.130"/>
    </reaction>
</comment>
<comment type="pathway">
    <text evidence="1">Glycolipid biosynthesis; lipid IV(A) biosynthesis; lipid IV(A) from (3R)-3-hydroxytetradecanoyl-[acyl-carrier-protein] and UDP-N-acetyl-alpha-D-glucosamine: step 6/6.</text>
</comment>
<comment type="similarity">
    <text evidence="1">Belongs to the LpxK family.</text>
</comment>
<dbReference type="EC" id="2.7.1.130" evidence="1"/>
<dbReference type="EMBL" id="AE000657">
    <property type="protein sequence ID" value="AAC07542.1"/>
    <property type="molecule type" value="Genomic_DNA"/>
</dbReference>
<dbReference type="PIR" id="C70443">
    <property type="entry name" value="C70443"/>
</dbReference>
<dbReference type="RefSeq" id="NP_214138.1">
    <property type="nucleotide sequence ID" value="NC_000918.1"/>
</dbReference>
<dbReference type="RefSeq" id="WP_010881075.1">
    <property type="nucleotide sequence ID" value="NC_000918.1"/>
</dbReference>
<dbReference type="PDB" id="4EHW">
    <property type="method" value="X-ray"/>
    <property type="resolution" value="2.30 A"/>
    <property type="chains" value="A=1-315"/>
</dbReference>
<dbReference type="PDB" id="4EHX">
    <property type="method" value="X-ray"/>
    <property type="resolution" value="1.90 A"/>
    <property type="chains" value="A=1-315"/>
</dbReference>
<dbReference type="PDB" id="4EHY">
    <property type="method" value="X-ray"/>
    <property type="resolution" value="2.20 A"/>
    <property type="chains" value="A=1-315"/>
</dbReference>
<dbReference type="PDB" id="4ITL">
    <property type="method" value="X-ray"/>
    <property type="resolution" value="2.09 A"/>
    <property type="chains" value="A=1-315"/>
</dbReference>
<dbReference type="PDB" id="4ITM">
    <property type="method" value="X-ray"/>
    <property type="resolution" value="2.20 A"/>
    <property type="chains" value="A=1-315"/>
</dbReference>
<dbReference type="PDB" id="4ITN">
    <property type="method" value="X-ray"/>
    <property type="resolution" value="2.19 A"/>
    <property type="chains" value="A=1-315"/>
</dbReference>
<dbReference type="PDB" id="4LKV">
    <property type="method" value="X-ray"/>
    <property type="resolution" value="3.51 A"/>
    <property type="chains" value="A/B/C/D=1-315"/>
</dbReference>
<dbReference type="PDBsum" id="4EHW"/>
<dbReference type="PDBsum" id="4EHX"/>
<dbReference type="PDBsum" id="4EHY"/>
<dbReference type="PDBsum" id="4ITL"/>
<dbReference type="PDBsum" id="4ITM"/>
<dbReference type="PDBsum" id="4ITN"/>
<dbReference type="PDBsum" id="4LKV"/>
<dbReference type="SMR" id="O67572"/>
<dbReference type="FunCoup" id="O67572">
    <property type="interactions" value="183"/>
</dbReference>
<dbReference type="STRING" id="224324.aq_1656"/>
<dbReference type="EnsemblBacteria" id="AAC07542">
    <property type="protein sequence ID" value="AAC07542"/>
    <property type="gene ID" value="aq_1656"/>
</dbReference>
<dbReference type="KEGG" id="aae:aq_1656"/>
<dbReference type="PATRIC" id="fig|224324.8.peg.1278"/>
<dbReference type="eggNOG" id="COG1663">
    <property type="taxonomic scope" value="Bacteria"/>
</dbReference>
<dbReference type="HOGENOM" id="CLU_038816_6_0_0"/>
<dbReference type="InParanoid" id="O67572"/>
<dbReference type="OrthoDB" id="9789797at2"/>
<dbReference type="BRENDA" id="2.7.1.130">
    <property type="organism ID" value="396"/>
</dbReference>
<dbReference type="UniPathway" id="UPA00359">
    <property type="reaction ID" value="UER00482"/>
</dbReference>
<dbReference type="EvolutionaryTrace" id="O67572"/>
<dbReference type="Proteomes" id="UP000000798">
    <property type="component" value="Chromosome"/>
</dbReference>
<dbReference type="GO" id="GO:0005886">
    <property type="term" value="C:plasma membrane"/>
    <property type="evidence" value="ECO:0000318"/>
    <property type="project" value="GO_Central"/>
</dbReference>
<dbReference type="GO" id="GO:0005524">
    <property type="term" value="F:ATP binding"/>
    <property type="evidence" value="ECO:0007669"/>
    <property type="project" value="UniProtKB-UniRule"/>
</dbReference>
<dbReference type="GO" id="GO:0009029">
    <property type="term" value="F:tetraacyldisaccharide 4'-kinase activity"/>
    <property type="evidence" value="ECO:0000318"/>
    <property type="project" value="GO_Central"/>
</dbReference>
<dbReference type="GO" id="GO:0009245">
    <property type="term" value="P:lipid A biosynthetic process"/>
    <property type="evidence" value="ECO:0000318"/>
    <property type="project" value="GO_Central"/>
</dbReference>
<dbReference type="GO" id="GO:0009244">
    <property type="term" value="P:lipopolysaccharide core region biosynthetic process"/>
    <property type="evidence" value="ECO:0000318"/>
    <property type="project" value="GO_Central"/>
</dbReference>
<dbReference type="HAMAP" id="MF_00409">
    <property type="entry name" value="LpxK"/>
    <property type="match status" value="1"/>
</dbReference>
<dbReference type="InterPro" id="IPR003758">
    <property type="entry name" value="LpxK"/>
</dbReference>
<dbReference type="InterPro" id="IPR027417">
    <property type="entry name" value="P-loop_NTPase"/>
</dbReference>
<dbReference type="NCBIfam" id="TIGR00682">
    <property type="entry name" value="lpxK"/>
    <property type="match status" value="1"/>
</dbReference>
<dbReference type="PANTHER" id="PTHR42724">
    <property type="entry name" value="TETRAACYLDISACCHARIDE 4'-KINASE"/>
    <property type="match status" value="1"/>
</dbReference>
<dbReference type="PANTHER" id="PTHR42724:SF1">
    <property type="entry name" value="TETRAACYLDISACCHARIDE 4'-KINASE, MITOCHONDRIAL-RELATED"/>
    <property type="match status" value="1"/>
</dbReference>
<dbReference type="Pfam" id="PF02606">
    <property type="entry name" value="LpxK"/>
    <property type="match status" value="1"/>
</dbReference>
<dbReference type="SUPFAM" id="SSF52540">
    <property type="entry name" value="P-loop containing nucleoside triphosphate hydrolases"/>
    <property type="match status" value="1"/>
</dbReference>
<evidence type="ECO:0000255" key="1">
    <source>
        <dbReference type="HAMAP-Rule" id="MF_00409"/>
    </source>
</evidence>
<evidence type="ECO:0007829" key="2">
    <source>
        <dbReference type="PDB" id="4EHW"/>
    </source>
</evidence>
<evidence type="ECO:0007829" key="3">
    <source>
        <dbReference type="PDB" id="4EHX"/>
    </source>
</evidence>
<evidence type="ECO:0007829" key="4">
    <source>
        <dbReference type="PDB" id="4ITN"/>
    </source>
</evidence>
<feature type="chain" id="PRO_0000190907" description="Tetraacyldisaccharide 4'-kinase">
    <location>
        <begin position="1"/>
        <end position="315"/>
    </location>
</feature>
<feature type="binding site" evidence="1">
    <location>
        <begin position="45"/>
        <end position="52"/>
    </location>
    <ligand>
        <name>ATP</name>
        <dbReference type="ChEBI" id="CHEBI:30616"/>
    </ligand>
</feature>
<feature type="helix" evidence="3">
    <location>
        <begin position="3"/>
        <end position="6"/>
    </location>
</feature>
<feature type="helix" evidence="3">
    <location>
        <begin position="7"/>
        <end position="25"/>
    </location>
</feature>
<feature type="strand" evidence="3">
    <location>
        <begin position="38"/>
        <end position="47"/>
    </location>
</feature>
<feature type="helix" evidence="3">
    <location>
        <begin position="51"/>
        <end position="61"/>
    </location>
</feature>
<feature type="turn" evidence="3">
    <location>
        <begin position="62"/>
        <end position="64"/>
    </location>
</feature>
<feature type="strand" evidence="3">
    <location>
        <begin position="67"/>
        <end position="71"/>
    </location>
</feature>
<feature type="strand" evidence="3">
    <location>
        <begin position="80"/>
        <end position="86"/>
    </location>
</feature>
<feature type="helix" evidence="3">
    <location>
        <begin position="94"/>
        <end position="97"/>
    </location>
</feature>
<feature type="helix" evidence="3">
    <location>
        <begin position="99"/>
        <end position="107"/>
    </location>
</feature>
<feature type="strand" evidence="3">
    <location>
        <begin position="111"/>
        <end position="118"/>
    </location>
</feature>
<feature type="helix" evidence="3">
    <location>
        <begin position="119"/>
        <end position="130"/>
    </location>
</feature>
<feature type="strand" evidence="3">
    <location>
        <begin position="133"/>
        <end position="139"/>
    </location>
</feature>
<feature type="strand" evidence="3">
    <location>
        <begin position="149"/>
        <end position="156"/>
    </location>
</feature>
<feature type="helix" evidence="3">
    <location>
        <begin position="157"/>
        <end position="160"/>
    </location>
</feature>
<feature type="turn" evidence="3">
    <location>
        <begin position="165"/>
        <end position="167"/>
    </location>
</feature>
<feature type="strand" evidence="3">
    <location>
        <begin position="168"/>
        <end position="172"/>
    </location>
</feature>
<feature type="helix" evidence="3">
    <location>
        <begin position="174"/>
        <end position="179"/>
    </location>
</feature>
<feature type="strand" evidence="3">
    <location>
        <begin position="181"/>
        <end position="186"/>
    </location>
</feature>
<feature type="turn" evidence="3">
    <location>
        <begin position="188"/>
        <end position="190"/>
    </location>
</feature>
<feature type="strand" evidence="2">
    <location>
        <begin position="197"/>
        <end position="199"/>
    </location>
</feature>
<feature type="strand" evidence="3">
    <location>
        <begin position="201"/>
        <end position="212"/>
    </location>
</feature>
<feature type="helix" evidence="3">
    <location>
        <begin position="221"/>
        <end position="224"/>
    </location>
</feature>
<feature type="strand" evidence="3">
    <location>
        <begin position="229"/>
        <end position="235"/>
    </location>
</feature>
<feature type="helix" evidence="3">
    <location>
        <begin position="237"/>
        <end position="248"/>
    </location>
</feature>
<feature type="strand" evidence="3">
    <location>
        <begin position="252"/>
        <end position="257"/>
    </location>
</feature>
<feature type="strand" evidence="3">
    <location>
        <begin position="275"/>
        <end position="277"/>
    </location>
</feature>
<feature type="helix" evidence="3">
    <location>
        <begin position="279"/>
        <end position="282"/>
    </location>
</feature>
<feature type="helix" evidence="4">
    <location>
        <begin position="283"/>
        <end position="285"/>
    </location>
</feature>
<feature type="strand" evidence="3">
    <location>
        <begin position="291"/>
        <end position="300"/>
    </location>
</feature>
<feature type="helix" evidence="3">
    <location>
        <begin position="303"/>
        <end position="312"/>
    </location>
</feature>
<proteinExistence type="evidence at protein level"/>
<gene>
    <name evidence="1" type="primary">lpxK</name>
    <name type="ordered locus">aq_1656</name>
</gene>
<accession>O67572</accession>